<organism>
    <name type="scientific">Bacillus anthracis (strain CDC 684 / NRRL 3495)</name>
    <dbReference type="NCBI Taxonomy" id="568206"/>
    <lineage>
        <taxon>Bacteria</taxon>
        <taxon>Bacillati</taxon>
        <taxon>Bacillota</taxon>
        <taxon>Bacilli</taxon>
        <taxon>Bacillales</taxon>
        <taxon>Bacillaceae</taxon>
        <taxon>Bacillus</taxon>
        <taxon>Bacillus cereus group</taxon>
    </lineage>
</organism>
<comment type="function">
    <text evidence="1">Redox regulated molecular chaperone. Protects both thermally unfolding and oxidatively damaged proteins from irreversible aggregation. Plays an important role in the bacterial defense system toward oxidative stress.</text>
</comment>
<comment type="subcellular location">
    <subcellularLocation>
        <location evidence="1">Cytoplasm</location>
    </subcellularLocation>
</comment>
<comment type="PTM">
    <text evidence="1">Under oxidizing conditions two disulfide bonds are formed involving the reactive cysteines. Under reducing conditions zinc is bound to the reactive cysteines and the protein is inactive.</text>
</comment>
<comment type="similarity">
    <text evidence="1">Belongs to the HSP33 family.</text>
</comment>
<protein>
    <recommendedName>
        <fullName evidence="1">33 kDa chaperonin</fullName>
    </recommendedName>
    <alternativeName>
        <fullName evidence="1">Heat shock protein 33 homolog</fullName>
        <shortName evidence="1">HSP33</shortName>
    </alternativeName>
</protein>
<name>HSLO_BACAC</name>
<evidence type="ECO:0000255" key="1">
    <source>
        <dbReference type="HAMAP-Rule" id="MF_00117"/>
    </source>
</evidence>
<accession>C3LJ40</accession>
<gene>
    <name evidence="1" type="primary">hslO</name>
    <name type="ordered locus">BAMEG_0079</name>
</gene>
<proteinExistence type="inferred from homology"/>
<keyword id="KW-0143">Chaperone</keyword>
<keyword id="KW-0963">Cytoplasm</keyword>
<keyword id="KW-1015">Disulfide bond</keyword>
<keyword id="KW-0676">Redox-active center</keyword>
<keyword id="KW-0862">Zinc</keyword>
<dbReference type="EMBL" id="CP001215">
    <property type="protein sequence ID" value="ACP16757.1"/>
    <property type="molecule type" value="Genomic_DNA"/>
</dbReference>
<dbReference type="RefSeq" id="WP_000656366.1">
    <property type="nucleotide sequence ID" value="NC_012581.1"/>
</dbReference>
<dbReference type="SMR" id="C3LJ40"/>
<dbReference type="GeneID" id="75083333"/>
<dbReference type="KEGG" id="bah:BAMEG_0079"/>
<dbReference type="HOGENOM" id="CLU_054493_1_0_9"/>
<dbReference type="GO" id="GO:0005737">
    <property type="term" value="C:cytoplasm"/>
    <property type="evidence" value="ECO:0007669"/>
    <property type="project" value="UniProtKB-SubCell"/>
</dbReference>
<dbReference type="GO" id="GO:0044183">
    <property type="term" value="F:protein folding chaperone"/>
    <property type="evidence" value="ECO:0007669"/>
    <property type="project" value="TreeGrafter"/>
</dbReference>
<dbReference type="GO" id="GO:0051082">
    <property type="term" value="F:unfolded protein binding"/>
    <property type="evidence" value="ECO:0007669"/>
    <property type="project" value="UniProtKB-UniRule"/>
</dbReference>
<dbReference type="GO" id="GO:0042026">
    <property type="term" value="P:protein refolding"/>
    <property type="evidence" value="ECO:0007669"/>
    <property type="project" value="TreeGrafter"/>
</dbReference>
<dbReference type="CDD" id="cd00498">
    <property type="entry name" value="Hsp33"/>
    <property type="match status" value="1"/>
</dbReference>
<dbReference type="Gene3D" id="3.55.30.10">
    <property type="entry name" value="Hsp33 domain"/>
    <property type="match status" value="1"/>
</dbReference>
<dbReference type="Gene3D" id="3.90.1280.10">
    <property type="entry name" value="HSP33 redox switch-like"/>
    <property type="match status" value="1"/>
</dbReference>
<dbReference type="HAMAP" id="MF_00117">
    <property type="entry name" value="HslO"/>
    <property type="match status" value="1"/>
</dbReference>
<dbReference type="InterPro" id="IPR000397">
    <property type="entry name" value="Heat_shock_Hsp33"/>
</dbReference>
<dbReference type="InterPro" id="IPR016154">
    <property type="entry name" value="Heat_shock_Hsp33_C"/>
</dbReference>
<dbReference type="InterPro" id="IPR016153">
    <property type="entry name" value="Heat_shock_Hsp33_N"/>
</dbReference>
<dbReference type="NCBIfam" id="NF001033">
    <property type="entry name" value="PRK00114.1"/>
    <property type="match status" value="1"/>
</dbReference>
<dbReference type="PANTHER" id="PTHR30111">
    <property type="entry name" value="33 KDA CHAPERONIN"/>
    <property type="match status" value="1"/>
</dbReference>
<dbReference type="PANTHER" id="PTHR30111:SF1">
    <property type="entry name" value="33 KDA CHAPERONIN"/>
    <property type="match status" value="1"/>
</dbReference>
<dbReference type="Pfam" id="PF01430">
    <property type="entry name" value="HSP33"/>
    <property type="match status" value="1"/>
</dbReference>
<dbReference type="PIRSF" id="PIRSF005261">
    <property type="entry name" value="Heat_shock_Hsp33"/>
    <property type="match status" value="1"/>
</dbReference>
<dbReference type="SUPFAM" id="SSF64397">
    <property type="entry name" value="Hsp33 domain"/>
    <property type="match status" value="1"/>
</dbReference>
<dbReference type="SUPFAM" id="SSF118352">
    <property type="entry name" value="HSP33 redox switch-like"/>
    <property type="match status" value="1"/>
</dbReference>
<feature type="chain" id="PRO_1000119250" description="33 kDa chaperonin">
    <location>
        <begin position="1"/>
        <end position="291"/>
    </location>
</feature>
<feature type="disulfide bond" description="Redox-active" evidence="1">
    <location>
        <begin position="237"/>
        <end position="239"/>
    </location>
</feature>
<feature type="disulfide bond" description="Redox-active" evidence="1">
    <location>
        <begin position="270"/>
        <end position="273"/>
    </location>
</feature>
<sequence length="291" mass="32058">MKDYLVKALAFDGEVRAYSVRTTNTVSEAQRRHDTWRTASAALGRSLTAGTMMGAMLKGDQKLTIKVEGNGPIGPILVDAHANGDVRGYVTNPHVDFEGTEQGKLRVYQAVGTEGFVTVIKDIGMREPFIGQSPIVSGELGEDFTYYFAVSEQTPSSVGVGVLVNGDDSILAAGGFILQIMPGAQEETISFIEERLQKIPPVSTLIEQGLSPEELLYAVLGEDKVKVLETMDVQFNCTCSRERIESVLISLGKTELEQVREEEEETEVHCHFCNERYKFSKEDITNLIENL</sequence>
<reference key="1">
    <citation type="submission" date="2008-10" db="EMBL/GenBank/DDBJ databases">
        <title>Genome sequence of Bacillus anthracis str. CDC 684.</title>
        <authorList>
            <person name="Dodson R.J."/>
            <person name="Munk A.C."/>
            <person name="Brettin T."/>
            <person name="Bruce D."/>
            <person name="Detter C."/>
            <person name="Tapia R."/>
            <person name="Han C."/>
            <person name="Sutton G."/>
            <person name="Sims D."/>
        </authorList>
    </citation>
    <scope>NUCLEOTIDE SEQUENCE [LARGE SCALE GENOMIC DNA]</scope>
    <source>
        <strain>CDC 684 / NRRL 3495</strain>
    </source>
</reference>